<accession>A7GH84</accession>
<reference key="1">
    <citation type="submission" date="2007-06" db="EMBL/GenBank/DDBJ databases">
        <authorList>
            <person name="Brinkac L.M."/>
            <person name="Daugherty S."/>
            <person name="Dodson R.J."/>
            <person name="Madupu R."/>
            <person name="Brown J.L."/>
            <person name="Bruce D."/>
            <person name="Detter C."/>
            <person name="Munk C."/>
            <person name="Smith L.A."/>
            <person name="Smith T.J."/>
            <person name="White O."/>
            <person name="Brettin T.S."/>
        </authorList>
    </citation>
    <scope>NUCLEOTIDE SEQUENCE [LARGE SCALE GENOMIC DNA]</scope>
    <source>
        <strain>Langeland / NCTC 10281 / Type F</strain>
    </source>
</reference>
<gene>
    <name evidence="1" type="primary">ribH</name>
    <name type="ordered locus">CLI_2919</name>
</gene>
<feature type="chain" id="PRO_1000040404" description="6,7-dimethyl-8-ribityllumazine synthase">
    <location>
        <begin position="1"/>
        <end position="154"/>
    </location>
</feature>
<feature type="active site" description="Proton donor" evidence="1">
    <location>
        <position position="88"/>
    </location>
</feature>
<feature type="binding site" evidence="1">
    <location>
        <position position="22"/>
    </location>
    <ligand>
        <name>5-amino-6-(D-ribitylamino)uracil</name>
        <dbReference type="ChEBI" id="CHEBI:15934"/>
    </ligand>
</feature>
<feature type="binding site" evidence="1">
    <location>
        <begin position="56"/>
        <end position="58"/>
    </location>
    <ligand>
        <name>5-amino-6-(D-ribitylamino)uracil</name>
        <dbReference type="ChEBI" id="CHEBI:15934"/>
    </ligand>
</feature>
<feature type="binding site" evidence="1">
    <location>
        <begin position="80"/>
        <end position="82"/>
    </location>
    <ligand>
        <name>5-amino-6-(D-ribitylamino)uracil</name>
        <dbReference type="ChEBI" id="CHEBI:15934"/>
    </ligand>
</feature>
<feature type="binding site" evidence="1">
    <location>
        <begin position="85"/>
        <end position="86"/>
    </location>
    <ligand>
        <name>(2S)-2-hydroxy-3-oxobutyl phosphate</name>
        <dbReference type="ChEBI" id="CHEBI:58830"/>
    </ligand>
</feature>
<feature type="binding site" evidence="1">
    <location>
        <position position="113"/>
    </location>
    <ligand>
        <name>5-amino-6-(D-ribitylamino)uracil</name>
        <dbReference type="ChEBI" id="CHEBI:15934"/>
    </ligand>
</feature>
<feature type="binding site" evidence="1">
    <location>
        <position position="127"/>
    </location>
    <ligand>
        <name>(2S)-2-hydroxy-3-oxobutyl phosphate</name>
        <dbReference type="ChEBI" id="CHEBI:58830"/>
    </ligand>
</feature>
<keyword id="KW-0686">Riboflavin biosynthesis</keyword>
<keyword id="KW-0808">Transferase</keyword>
<name>RISB_CLOBL</name>
<dbReference type="EC" id="2.5.1.78" evidence="1"/>
<dbReference type="EMBL" id="CP000728">
    <property type="protein sequence ID" value="ABS40377.1"/>
    <property type="molecule type" value="Genomic_DNA"/>
</dbReference>
<dbReference type="SMR" id="A7GH84"/>
<dbReference type="KEGG" id="cbf:CLI_2919"/>
<dbReference type="HOGENOM" id="CLU_089358_1_1_9"/>
<dbReference type="UniPathway" id="UPA00275">
    <property type="reaction ID" value="UER00404"/>
</dbReference>
<dbReference type="Proteomes" id="UP000002410">
    <property type="component" value="Chromosome"/>
</dbReference>
<dbReference type="GO" id="GO:0005829">
    <property type="term" value="C:cytosol"/>
    <property type="evidence" value="ECO:0007669"/>
    <property type="project" value="TreeGrafter"/>
</dbReference>
<dbReference type="GO" id="GO:0009349">
    <property type="term" value="C:riboflavin synthase complex"/>
    <property type="evidence" value="ECO:0007669"/>
    <property type="project" value="InterPro"/>
</dbReference>
<dbReference type="GO" id="GO:0000906">
    <property type="term" value="F:6,7-dimethyl-8-ribityllumazine synthase activity"/>
    <property type="evidence" value="ECO:0007669"/>
    <property type="project" value="UniProtKB-UniRule"/>
</dbReference>
<dbReference type="GO" id="GO:0009231">
    <property type="term" value="P:riboflavin biosynthetic process"/>
    <property type="evidence" value="ECO:0007669"/>
    <property type="project" value="UniProtKB-UniRule"/>
</dbReference>
<dbReference type="CDD" id="cd09209">
    <property type="entry name" value="Lumazine_synthase-I"/>
    <property type="match status" value="1"/>
</dbReference>
<dbReference type="FunFam" id="3.40.50.960:FF:000001">
    <property type="entry name" value="6,7-dimethyl-8-ribityllumazine synthase"/>
    <property type="match status" value="1"/>
</dbReference>
<dbReference type="Gene3D" id="3.40.50.960">
    <property type="entry name" value="Lumazine/riboflavin synthase"/>
    <property type="match status" value="1"/>
</dbReference>
<dbReference type="HAMAP" id="MF_00178">
    <property type="entry name" value="Lumazine_synth"/>
    <property type="match status" value="1"/>
</dbReference>
<dbReference type="InterPro" id="IPR034964">
    <property type="entry name" value="LS"/>
</dbReference>
<dbReference type="InterPro" id="IPR002180">
    <property type="entry name" value="LS/RS"/>
</dbReference>
<dbReference type="InterPro" id="IPR036467">
    <property type="entry name" value="LS/RS_sf"/>
</dbReference>
<dbReference type="NCBIfam" id="TIGR00114">
    <property type="entry name" value="lumazine-synth"/>
    <property type="match status" value="1"/>
</dbReference>
<dbReference type="NCBIfam" id="NF000812">
    <property type="entry name" value="PRK00061.1-4"/>
    <property type="match status" value="1"/>
</dbReference>
<dbReference type="PANTHER" id="PTHR21058:SF0">
    <property type="entry name" value="6,7-DIMETHYL-8-RIBITYLLUMAZINE SYNTHASE"/>
    <property type="match status" value="1"/>
</dbReference>
<dbReference type="PANTHER" id="PTHR21058">
    <property type="entry name" value="6,7-DIMETHYL-8-RIBITYLLUMAZINE SYNTHASE DMRL SYNTHASE LUMAZINE SYNTHASE"/>
    <property type="match status" value="1"/>
</dbReference>
<dbReference type="Pfam" id="PF00885">
    <property type="entry name" value="DMRL_synthase"/>
    <property type="match status" value="1"/>
</dbReference>
<dbReference type="SUPFAM" id="SSF52121">
    <property type="entry name" value="Lumazine synthase"/>
    <property type="match status" value="1"/>
</dbReference>
<sequence>MKIYEGRLTAEGLKVGIIVSRFNEFITSKLLAGSIDCLKRHGAKEDNIEVCWVPGAFEIPVIAKKMASKGKYDAVICLGAVIRGATPHFDYVSSEVSKGVAHVSLDKEVPVIFGVLTTDTIEQAIERAGTKAGNKGYDAAMSAIEMSNLMKVLD</sequence>
<organism>
    <name type="scientific">Clostridium botulinum (strain Langeland / NCTC 10281 / Type F)</name>
    <dbReference type="NCBI Taxonomy" id="441772"/>
    <lineage>
        <taxon>Bacteria</taxon>
        <taxon>Bacillati</taxon>
        <taxon>Bacillota</taxon>
        <taxon>Clostridia</taxon>
        <taxon>Eubacteriales</taxon>
        <taxon>Clostridiaceae</taxon>
        <taxon>Clostridium</taxon>
    </lineage>
</organism>
<protein>
    <recommendedName>
        <fullName evidence="1">6,7-dimethyl-8-ribityllumazine synthase</fullName>
        <shortName evidence="1">DMRL synthase</shortName>
        <shortName evidence="1">LS</shortName>
        <shortName evidence="1">Lumazine synthase</shortName>
        <ecNumber evidence="1">2.5.1.78</ecNumber>
    </recommendedName>
</protein>
<proteinExistence type="inferred from homology"/>
<comment type="function">
    <text evidence="1">Catalyzes the formation of 6,7-dimethyl-8-ribityllumazine by condensation of 5-amino-6-(D-ribitylamino)uracil with 3,4-dihydroxy-2-butanone 4-phosphate. This is the penultimate step in the biosynthesis of riboflavin.</text>
</comment>
<comment type="catalytic activity">
    <reaction evidence="1">
        <text>(2S)-2-hydroxy-3-oxobutyl phosphate + 5-amino-6-(D-ribitylamino)uracil = 6,7-dimethyl-8-(1-D-ribityl)lumazine + phosphate + 2 H2O + H(+)</text>
        <dbReference type="Rhea" id="RHEA:26152"/>
        <dbReference type="ChEBI" id="CHEBI:15377"/>
        <dbReference type="ChEBI" id="CHEBI:15378"/>
        <dbReference type="ChEBI" id="CHEBI:15934"/>
        <dbReference type="ChEBI" id="CHEBI:43474"/>
        <dbReference type="ChEBI" id="CHEBI:58201"/>
        <dbReference type="ChEBI" id="CHEBI:58830"/>
        <dbReference type="EC" id="2.5.1.78"/>
    </reaction>
</comment>
<comment type="pathway">
    <text evidence="1">Cofactor biosynthesis; riboflavin biosynthesis; riboflavin from 2-hydroxy-3-oxobutyl phosphate and 5-amino-6-(D-ribitylamino)uracil: step 1/2.</text>
</comment>
<comment type="similarity">
    <text evidence="1">Belongs to the DMRL synthase family.</text>
</comment>
<evidence type="ECO:0000255" key="1">
    <source>
        <dbReference type="HAMAP-Rule" id="MF_00178"/>
    </source>
</evidence>